<evidence type="ECO:0000250" key="1"/>
<evidence type="ECO:0000255" key="2">
    <source>
        <dbReference type="PROSITE-ProRule" id="PRU00092"/>
    </source>
</evidence>
<evidence type="ECO:0000256" key="3">
    <source>
        <dbReference type="SAM" id="MobiDB-lite"/>
    </source>
</evidence>
<evidence type="ECO:0000305" key="4"/>
<dbReference type="EMBL" id="CR382132">
    <property type="protein sequence ID" value="CAG78086.1"/>
    <property type="molecule type" value="Genomic_DNA"/>
</dbReference>
<dbReference type="RefSeq" id="XP_505279.1">
    <property type="nucleotide sequence ID" value="XM_505279.1"/>
</dbReference>
<dbReference type="STRING" id="284591.Q6C233"/>
<dbReference type="EnsemblFungi" id="CAG78086">
    <property type="protein sequence ID" value="CAG78086"/>
    <property type="gene ID" value="YALI0_F11253g"/>
</dbReference>
<dbReference type="KEGG" id="yli:2907966"/>
<dbReference type="VEuPathDB" id="FungiDB:YALI0_F11253g"/>
<dbReference type="HOGENOM" id="CLU_347551_0_0_1"/>
<dbReference type="InParanoid" id="Q6C233"/>
<dbReference type="OMA" id="PVFMRID"/>
<dbReference type="OrthoDB" id="122565at4891"/>
<dbReference type="Proteomes" id="UP000001300">
    <property type="component" value="Chromosome F"/>
</dbReference>
<dbReference type="GO" id="GO:0005737">
    <property type="term" value="C:cytoplasm"/>
    <property type="evidence" value="ECO:0007669"/>
    <property type="project" value="UniProtKB-SubCell"/>
</dbReference>
<dbReference type="GO" id="GO:0005634">
    <property type="term" value="C:nucleus"/>
    <property type="evidence" value="ECO:0000318"/>
    <property type="project" value="GO_Central"/>
</dbReference>
<dbReference type="GO" id="GO:0003676">
    <property type="term" value="F:nucleic acid binding"/>
    <property type="evidence" value="ECO:0007669"/>
    <property type="project" value="InterPro"/>
</dbReference>
<dbReference type="GO" id="GO:0006397">
    <property type="term" value="P:mRNA processing"/>
    <property type="evidence" value="ECO:0007669"/>
    <property type="project" value="UniProtKB-KW"/>
</dbReference>
<dbReference type="GO" id="GO:0008380">
    <property type="term" value="P:RNA splicing"/>
    <property type="evidence" value="ECO:0007669"/>
    <property type="project" value="UniProtKB-KW"/>
</dbReference>
<dbReference type="InterPro" id="IPR000467">
    <property type="entry name" value="G_patch_dom"/>
</dbReference>
<dbReference type="InterPro" id="IPR051189">
    <property type="entry name" value="Splicing_assoc_domain"/>
</dbReference>
<dbReference type="PANTHER" id="PTHR14195">
    <property type="entry name" value="G PATCH DOMAIN CONTAINING PROTEIN 2"/>
    <property type="match status" value="1"/>
</dbReference>
<dbReference type="Pfam" id="PF01585">
    <property type="entry name" value="G-patch"/>
    <property type="match status" value="1"/>
</dbReference>
<dbReference type="SMART" id="SM00443">
    <property type="entry name" value="G_patch"/>
    <property type="match status" value="1"/>
</dbReference>
<dbReference type="PROSITE" id="PS50174">
    <property type="entry name" value="G_PATCH"/>
    <property type="match status" value="1"/>
</dbReference>
<organism>
    <name type="scientific">Yarrowia lipolytica (strain CLIB 122 / E 150)</name>
    <name type="common">Yeast</name>
    <name type="synonym">Candida lipolytica</name>
    <dbReference type="NCBI Taxonomy" id="284591"/>
    <lineage>
        <taxon>Eukaryota</taxon>
        <taxon>Fungi</taxon>
        <taxon>Dikarya</taxon>
        <taxon>Ascomycota</taxon>
        <taxon>Saccharomycotina</taxon>
        <taxon>Dipodascomycetes</taxon>
        <taxon>Dipodascales</taxon>
        <taxon>Dipodascales incertae sedis</taxon>
        <taxon>Yarrowia</taxon>
    </lineage>
</organism>
<keyword id="KW-0963">Cytoplasm</keyword>
<keyword id="KW-0507">mRNA processing</keyword>
<keyword id="KW-0508">mRNA splicing</keyword>
<keyword id="KW-0539">Nucleus</keyword>
<keyword id="KW-1185">Reference proteome</keyword>
<reference key="1">
    <citation type="journal article" date="2004" name="Nature">
        <title>Genome evolution in yeasts.</title>
        <authorList>
            <person name="Dujon B."/>
            <person name="Sherman D."/>
            <person name="Fischer G."/>
            <person name="Durrens P."/>
            <person name="Casaregola S."/>
            <person name="Lafontaine I."/>
            <person name="de Montigny J."/>
            <person name="Marck C."/>
            <person name="Neuveglise C."/>
            <person name="Talla E."/>
            <person name="Goffard N."/>
            <person name="Frangeul L."/>
            <person name="Aigle M."/>
            <person name="Anthouard V."/>
            <person name="Babour A."/>
            <person name="Barbe V."/>
            <person name="Barnay S."/>
            <person name="Blanchin S."/>
            <person name="Beckerich J.-M."/>
            <person name="Beyne E."/>
            <person name="Bleykasten C."/>
            <person name="Boisrame A."/>
            <person name="Boyer J."/>
            <person name="Cattolico L."/>
            <person name="Confanioleri F."/>
            <person name="de Daruvar A."/>
            <person name="Despons L."/>
            <person name="Fabre E."/>
            <person name="Fairhead C."/>
            <person name="Ferry-Dumazet H."/>
            <person name="Groppi A."/>
            <person name="Hantraye F."/>
            <person name="Hennequin C."/>
            <person name="Jauniaux N."/>
            <person name="Joyet P."/>
            <person name="Kachouri R."/>
            <person name="Kerrest A."/>
            <person name="Koszul R."/>
            <person name="Lemaire M."/>
            <person name="Lesur I."/>
            <person name="Ma L."/>
            <person name="Muller H."/>
            <person name="Nicaud J.-M."/>
            <person name="Nikolski M."/>
            <person name="Oztas S."/>
            <person name="Ozier-Kalogeropoulos O."/>
            <person name="Pellenz S."/>
            <person name="Potier S."/>
            <person name="Richard G.-F."/>
            <person name="Straub M.-L."/>
            <person name="Suleau A."/>
            <person name="Swennen D."/>
            <person name="Tekaia F."/>
            <person name="Wesolowski-Louvel M."/>
            <person name="Westhof E."/>
            <person name="Wirth B."/>
            <person name="Zeniou-Meyer M."/>
            <person name="Zivanovic Y."/>
            <person name="Bolotin-Fukuhara M."/>
            <person name="Thierry A."/>
            <person name="Bouchier C."/>
            <person name="Caudron B."/>
            <person name="Scarpelli C."/>
            <person name="Gaillardin C."/>
            <person name="Weissenbach J."/>
            <person name="Wincker P."/>
            <person name="Souciet J.-L."/>
        </authorList>
    </citation>
    <scope>NUCLEOTIDE SEQUENCE [LARGE SCALE GENOMIC DNA]</scope>
    <source>
        <strain>CLIB 122 / E 150</strain>
    </source>
</reference>
<feature type="chain" id="PRO_0000325002" description="Protein SQS1">
    <location>
        <begin position="1"/>
        <end position="812"/>
    </location>
</feature>
<feature type="domain" description="R3H">
    <location>
        <begin position="636"/>
        <end position="700"/>
    </location>
</feature>
<feature type="domain" description="G-patch" evidence="2">
    <location>
        <begin position="769"/>
        <end position="812"/>
    </location>
</feature>
<feature type="region of interest" description="Disordered" evidence="3">
    <location>
        <begin position="17"/>
        <end position="101"/>
    </location>
</feature>
<feature type="region of interest" description="Disordered" evidence="3">
    <location>
        <begin position="188"/>
        <end position="284"/>
    </location>
</feature>
<feature type="region of interest" description="Disordered" evidence="3">
    <location>
        <begin position="409"/>
        <end position="435"/>
    </location>
</feature>
<feature type="region of interest" description="Disordered" evidence="3">
    <location>
        <begin position="511"/>
        <end position="540"/>
    </location>
</feature>
<feature type="compositionally biased region" description="Basic and acidic residues" evidence="3">
    <location>
        <begin position="27"/>
        <end position="37"/>
    </location>
</feature>
<feature type="compositionally biased region" description="Gly residues" evidence="3">
    <location>
        <begin position="60"/>
        <end position="74"/>
    </location>
</feature>
<feature type="compositionally biased region" description="Polar residues" evidence="3">
    <location>
        <begin position="88"/>
        <end position="97"/>
    </location>
</feature>
<feature type="compositionally biased region" description="Acidic residues" evidence="3">
    <location>
        <begin position="190"/>
        <end position="205"/>
    </location>
</feature>
<feature type="compositionally biased region" description="Acidic residues" evidence="3">
    <location>
        <begin position="214"/>
        <end position="243"/>
    </location>
</feature>
<feature type="compositionally biased region" description="Acidic residues" evidence="3">
    <location>
        <begin position="269"/>
        <end position="284"/>
    </location>
</feature>
<feature type="compositionally biased region" description="Acidic residues" evidence="3">
    <location>
        <begin position="413"/>
        <end position="435"/>
    </location>
</feature>
<gene>
    <name type="primary">SQS1</name>
    <name type="ordered locus">YALI0F11253g</name>
</gene>
<sequence length="812" mass="91279">MPTGYHNFCDDELDESINFNYNRKPSQPKDYDDDSRTSGRTTPKRARGGRGRGSGDRGGRGGSRGRGGNGGSSRGGKKNGWRDEKPSLLSSILNSRQHASENREHMFNKSLRGAEFITFIKSAEVYDPSKLLKDVGVTVEEANVVNEVEDIHIIVPEVIPEVQDVTGADAQLEDQESEDEEVVTTITETYADDGDNQEDDDDEMLVDGNGQLVDDYDDDEDDDDEDDEIDEEVDDDLIADENAVDVSTLQDAINEVANDTINDDRKEEDPSEGSEADDEEDEAAEFVMDTEGDPDMVDMEFMETDFAYLNKKKRAEKSRTPLTSSTAVISDRPVASVSADTTLVGSVASKKRHNADPRAVDIPEYNSDIDPEVLKDYIESIKNEDEGSDAENIDWIRSALGTQLGGTEQYYVDSDDSENDDFDDDDEDDEEEYEWPENGTVGCIRNIVATRAASQGYQFMVEHTLDADMEEWWNEDLIRDSVAEHLGVSVSELPDEAYRWYVTRLGGDIEDPDLSEEGINYSDYYDDSDEDEKAREASEMDSLIQSLIDDEVDDRKALMDHGYTPPMTKSRGKNQVPNFGVNDPELQAQLEKHWVNSRAAKRAKREQRQAMRKQGMFTKEFKQGGIIPLHAKYPILMTVEEARKEIEIFINAPNKPMVLDFPPMGAEFRSVLKKLSACYHLKPDIHGVQKSKHVSMLRTSRTSCHNNNYIQKFHDKFPKKFKLVIRNAKYSTEQYLYETKHQKGSKRSAVRVHNREGEIVGHEAPAIDDSNIGRLLLQKMGWTTGEGLGAQSRGISEPIIAKVKISKRGIGA</sequence>
<proteinExistence type="inferred from homology"/>
<comment type="function">
    <text evidence="1">May be involved in splicing.</text>
</comment>
<comment type="subcellular location">
    <subcellularLocation>
        <location evidence="1">Cytoplasm</location>
    </subcellularLocation>
    <subcellularLocation>
        <location evidence="1">Nucleus</location>
    </subcellularLocation>
</comment>
<comment type="similarity">
    <text evidence="4">Belongs to the SQS1 family.</text>
</comment>
<protein>
    <recommendedName>
        <fullName>Protein SQS1</fullName>
    </recommendedName>
</protein>
<name>SQS1_YARLI</name>
<accession>Q6C233</accession>